<evidence type="ECO:0000255" key="1">
    <source>
        <dbReference type="HAMAP-Rule" id="MF_01151"/>
    </source>
</evidence>
<evidence type="ECO:0000256" key="2">
    <source>
        <dbReference type="SAM" id="MobiDB-lite"/>
    </source>
</evidence>
<keyword id="KW-0143">Chaperone</keyword>
<keyword id="KW-0963">Cytoplasm</keyword>
<keyword id="KW-1185">Reference proteome</keyword>
<keyword id="KW-0346">Stress response</keyword>
<protein>
    <recommendedName>
        <fullName evidence="1">Protein GrpE</fullName>
    </recommendedName>
    <alternativeName>
        <fullName evidence="1">HSP-70 cofactor</fullName>
    </alternativeName>
</protein>
<proteinExistence type="inferred from homology"/>
<reference key="1">
    <citation type="journal article" date="2010" name="PLoS ONE">
        <title>Genome sequence of Cronobacter sakazakii BAA-894 and comparative genomic hybridization analysis with other Cronobacter species.</title>
        <authorList>
            <person name="Kucerova E."/>
            <person name="Clifton S.W."/>
            <person name="Xia X.Q."/>
            <person name="Long F."/>
            <person name="Porwollik S."/>
            <person name="Fulton L."/>
            <person name="Fronick C."/>
            <person name="Minx P."/>
            <person name="Kyung K."/>
            <person name="Warren W."/>
            <person name="Fulton R."/>
            <person name="Feng D."/>
            <person name="Wollam A."/>
            <person name="Shah N."/>
            <person name="Bhonagiri V."/>
            <person name="Nash W.E."/>
            <person name="Hallsworth-Pepin K."/>
            <person name="Wilson R.K."/>
            <person name="McClelland M."/>
            <person name="Forsythe S.J."/>
        </authorList>
    </citation>
    <scope>NUCLEOTIDE SEQUENCE [LARGE SCALE GENOMIC DNA]</scope>
    <source>
        <strain>ATCC BAA-894</strain>
    </source>
</reference>
<dbReference type="EMBL" id="CP000783">
    <property type="protein sequence ID" value="ABU75925.1"/>
    <property type="molecule type" value="Genomic_DNA"/>
</dbReference>
<dbReference type="RefSeq" id="WP_012123995.1">
    <property type="nucleotide sequence ID" value="NC_009778.1"/>
</dbReference>
<dbReference type="SMR" id="A7MHW7"/>
<dbReference type="KEGG" id="esa:ESA_00642"/>
<dbReference type="PATRIC" id="fig|290339.8.peg.568"/>
<dbReference type="HOGENOM" id="CLU_057217_6_0_6"/>
<dbReference type="Proteomes" id="UP000000260">
    <property type="component" value="Chromosome"/>
</dbReference>
<dbReference type="GO" id="GO:0005829">
    <property type="term" value="C:cytosol"/>
    <property type="evidence" value="ECO:0007669"/>
    <property type="project" value="TreeGrafter"/>
</dbReference>
<dbReference type="GO" id="GO:0000774">
    <property type="term" value="F:adenyl-nucleotide exchange factor activity"/>
    <property type="evidence" value="ECO:0007669"/>
    <property type="project" value="InterPro"/>
</dbReference>
<dbReference type="GO" id="GO:0042803">
    <property type="term" value="F:protein homodimerization activity"/>
    <property type="evidence" value="ECO:0007669"/>
    <property type="project" value="InterPro"/>
</dbReference>
<dbReference type="GO" id="GO:0051087">
    <property type="term" value="F:protein-folding chaperone binding"/>
    <property type="evidence" value="ECO:0007669"/>
    <property type="project" value="InterPro"/>
</dbReference>
<dbReference type="GO" id="GO:0051082">
    <property type="term" value="F:unfolded protein binding"/>
    <property type="evidence" value="ECO:0007669"/>
    <property type="project" value="TreeGrafter"/>
</dbReference>
<dbReference type="GO" id="GO:0006457">
    <property type="term" value="P:protein folding"/>
    <property type="evidence" value="ECO:0007669"/>
    <property type="project" value="InterPro"/>
</dbReference>
<dbReference type="CDD" id="cd00446">
    <property type="entry name" value="GrpE"/>
    <property type="match status" value="1"/>
</dbReference>
<dbReference type="FunFam" id="2.30.22.10:FF:000001">
    <property type="entry name" value="Protein GrpE"/>
    <property type="match status" value="1"/>
</dbReference>
<dbReference type="FunFam" id="3.90.20.20:FF:000001">
    <property type="entry name" value="Protein GrpE"/>
    <property type="match status" value="1"/>
</dbReference>
<dbReference type="Gene3D" id="3.90.20.20">
    <property type="match status" value="1"/>
</dbReference>
<dbReference type="Gene3D" id="2.30.22.10">
    <property type="entry name" value="Head domain of nucleotide exchange factor GrpE"/>
    <property type="match status" value="1"/>
</dbReference>
<dbReference type="HAMAP" id="MF_01151">
    <property type="entry name" value="GrpE"/>
    <property type="match status" value="1"/>
</dbReference>
<dbReference type="InterPro" id="IPR000740">
    <property type="entry name" value="GrpE"/>
</dbReference>
<dbReference type="InterPro" id="IPR013805">
    <property type="entry name" value="GrpE_coiled_coil"/>
</dbReference>
<dbReference type="InterPro" id="IPR009012">
    <property type="entry name" value="GrpE_head"/>
</dbReference>
<dbReference type="NCBIfam" id="NF007655">
    <property type="entry name" value="PRK10325.1"/>
    <property type="match status" value="1"/>
</dbReference>
<dbReference type="NCBIfam" id="NF010738">
    <property type="entry name" value="PRK14140.1"/>
    <property type="match status" value="1"/>
</dbReference>
<dbReference type="NCBIfam" id="NF010748">
    <property type="entry name" value="PRK14150.1"/>
    <property type="match status" value="1"/>
</dbReference>
<dbReference type="PANTHER" id="PTHR21237">
    <property type="entry name" value="GRPE PROTEIN"/>
    <property type="match status" value="1"/>
</dbReference>
<dbReference type="PANTHER" id="PTHR21237:SF23">
    <property type="entry name" value="GRPE PROTEIN HOMOLOG, MITOCHONDRIAL"/>
    <property type="match status" value="1"/>
</dbReference>
<dbReference type="Pfam" id="PF01025">
    <property type="entry name" value="GrpE"/>
    <property type="match status" value="1"/>
</dbReference>
<dbReference type="PRINTS" id="PR00773">
    <property type="entry name" value="GRPEPROTEIN"/>
</dbReference>
<dbReference type="SUPFAM" id="SSF58014">
    <property type="entry name" value="Coiled-coil domain of nucleotide exchange factor GrpE"/>
    <property type="match status" value="1"/>
</dbReference>
<dbReference type="SUPFAM" id="SSF51064">
    <property type="entry name" value="Head domain of nucleotide exchange factor GrpE"/>
    <property type="match status" value="1"/>
</dbReference>
<dbReference type="PROSITE" id="PS01071">
    <property type="entry name" value="GRPE"/>
    <property type="match status" value="1"/>
</dbReference>
<accession>A7MHW7</accession>
<comment type="function">
    <text evidence="1">Participates actively in the response to hyperosmotic and heat shock by preventing the aggregation of stress-denatured proteins, in association with DnaK and GrpE. It is the nucleotide exchange factor for DnaK and may function as a thermosensor. Unfolded proteins bind initially to DnaJ; upon interaction with the DnaJ-bound protein, DnaK hydrolyzes its bound ATP, resulting in the formation of a stable complex. GrpE releases ADP from DnaK; ATP binding to DnaK triggers the release of the substrate protein, thus completing the reaction cycle. Several rounds of ATP-dependent interactions between DnaJ, DnaK and GrpE are required for fully efficient folding.</text>
</comment>
<comment type="subunit">
    <text evidence="1">Homodimer.</text>
</comment>
<comment type="subcellular location">
    <subcellularLocation>
        <location evidence="1">Cytoplasm</location>
    </subcellularLocation>
</comment>
<comment type="similarity">
    <text evidence="1">Belongs to the GrpE family.</text>
</comment>
<name>GRPE_CROS8</name>
<gene>
    <name evidence="1" type="primary">grpE</name>
    <name type="ordered locus">ESA_00642</name>
</gene>
<organism>
    <name type="scientific">Cronobacter sakazakii (strain ATCC BAA-894)</name>
    <name type="common">Enterobacter sakazakii</name>
    <dbReference type="NCBI Taxonomy" id="290339"/>
    <lineage>
        <taxon>Bacteria</taxon>
        <taxon>Pseudomonadati</taxon>
        <taxon>Pseudomonadota</taxon>
        <taxon>Gammaproteobacteria</taxon>
        <taxon>Enterobacterales</taxon>
        <taxon>Enterobacteriaceae</taxon>
        <taxon>Cronobacter</taxon>
    </lineage>
</organism>
<feature type="chain" id="PRO_1000053578" description="Protein GrpE">
    <location>
        <begin position="1"/>
        <end position="197"/>
    </location>
</feature>
<feature type="region of interest" description="Disordered" evidence="2">
    <location>
        <begin position="1"/>
        <end position="43"/>
    </location>
</feature>
<sequence length="197" mass="22090">MSSKEQKTPDGQAPEEIVTEQHEEVESVESAESAEQVDPRDEEIARLQSELTQAQNRERDTVLRMKAEMENLRRRTEQDIEKAHKFALEKFINELLPVIDSLDRALEVANKENQDMAAMVEGIELTLKSMLDVVRKFGVEVIADTNVPLDPNVHQAIAMVESEDVAPNHVLAVMQKGYTLNGRTIRAAMVTVAKAKA</sequence>